<protein>
    <recommendedName>
        <fullName evidence="4">Geraniol dehydrogenase</fullName>
        <shortName evidence="4">GeDH</shortName>
        <ecNumber evidence="2">1.1.1.347</ecNumber>
    </recommendedName>
    <alternativeName>
        <fullName evidence="4">Farnesol dehydrogenase</fullName>
        <ecNumber evidence="2">1.1.1.354</ecNumber>
    </alternativeName>
    <alternativeName>
        <fullName evidence="4">NAD(+)-farnesol dehydrogenase</fullName>
    </alternativeName>
</protein>
<organism evidence="5">
    <name type="scientific">Carpoglyphus lactis</name>
    <name type="common">Dried fruit mite</name>
    <name type="synonym">Acarus lactis</name>
    <dbReference type="NCBI Taxonomy" id="223459"/>
    <lineage>
        <taxon>Eukaryota</taxon>
        <taxon>Metazoa</taxon>
        <taxon>Ecdysozoa</taxon>
        <taxon>Arthropoda</taxon>
        <taxon>Chelicerata</taxon>
        <taxon>Arachnida</taxon>
        <taxon>Acari</taxon>
        <taxon>Acariformes</taxon>
        <taxon>Sarcoptiformes</taxon>
        <taxon>Astigmata</taxon>
        <taxon>Hemisarcoptoidea</taxon>
        <taxon>Carpoglyphidae</taxon>
        <taxon>Carpoglyphus</taxon>
    </lineage>
</organism>
<feature type="chain" id="PRO_0000430710" description="Geraniol dehydrogenase">
    <location>
        <begin position="1"/>
        <end position="378"/>
    </location>
</feature>
<feature type="binding site" evidence="1">
    <location>
        <position position="48"/>
    </location>
    <ligand>
        <name>Zn(2+)</name>
        <dbReference type="ChEBI" id="CHEBI:29105"/>
        <label>1</label>
        <note>catalytic</note>
    </ligand>
</feature>
<feature type="binding site" evidence="1">
    <location>
        <position position="75"/>
    </location>
    <ligand>
        <name>Zn(2+)</name>
        <dbReference type="ChEBI" id="CHEBI:29105"/>
        <label>1</label>
        <note>catalytic</note>
    </ligand>
</feature>
<feature type="binding site" evidence="1">
    <location>
        <position position="105"/>
    </location>
    <ligand>
        <name>Zn(2+)</name>
        <dbReference type="ChEBI" id="CHEBI:29105"/>
        <label>2</label>
    </ligand>
</feature>
<feature type="binding site" evidence="1">
    <location>
        <position position="108"/>
    </location>
    <ligand>
        <name>Zn(2+)</name>
        <dbReference type="ChEBI" id="CHEBI:29105"/>
        <label>2</label>
    </ligand>
</feature>
<feature type="binding site" evidence="1">
    <location>
        <position position="111"/>
    </location>
    <ligand>
        <name>Zn(2+)</name>
        <dbReference type="ChEBI" id="CHEBI:29105"/>
        <label>2</label>
    </ligand>
</feature>
<feature type="binding site" evidence="1">
    <location>
        <position position="119"/>
    </location>
    <ligand>
        <name>Zn(2+)</name>
        <dbReference type="ChEBI" id="CHEBI:29105"/>
        <label>2</label>
    </ligand>
</feature>
<feature type="binding site" evidence="1">
    <location>
        <position position="179"/>
    </location>
    <ligand>
        <name>Zn(2+)</name>
        <dbReference type="ChEBI" id="CHEBI:29105"/>
        <label>1</label>
        <note>catalytic</note>
    </ligand>
</feature>
<accession>B2NI93</accession>
<reference key="1">
    <citation type="journal article" date="2008" name="FEBS J.">
        <title>Geraniol dehydrogenase, the key enzyme in biosynthesis of the alarm pheromone, from the astigmatid mite Carpoglyphus lactis (Acari: Carpoglyphidae).</title>
        <authorList>
            <person name="Noge K."/>
            <person name="Kato M."/>
            <person name="Mori N."/>
            <person name="Kataoka M."/>
            <person name="Tanaka C."/>
            <person name="Yamasue Y."/>
            <person name="Nishida R."/>
            <person name="Kuwahara Y."/>
        </authorList>
    </citation>
    <scope>PROTEIN SEQUENCE OF 1-42</scope>
    <scope>NUCLEOTIDE SEQUENCE [MRNA] OF 18-378</scope>
    <scope>FUNCTION</scope>
    <scope>CATALYTIC ACTIVITY</scope>
    <scope>SUBUNIT</scope>
    <scope>BIOPHYSICOCHEMICAL PROPERTIES</scope>
</reference>
<name>GEDH_CARLC</name>
<comment type="function">
    <text evidence="2">Catalyzes the NAD(+)-dependent oxidation of geraniol to geranial, playing an important role in the biosynthesis of neral, an alarm pheromone. Cannot use NADP(+). Also acts as a farnesol dehydrogenase by catalyzing the oxidation of (2E,6E)-farnesol to (2E,6E)-farnesal, with lower activity compared to geraniol dehydrogenase activity.</text>
</comment>
<comment type="catalytic activity">
    <reaction evidence="2">
        <text>(2E)-geraniol + NAD(+) = (2E)-geranial + NADH + H(+)</text>
        <dbReference type="Rhea" id="RHEA:34347"/>
        <dbReference type="ChEBI" id="CHEBI:15378"/>
        <dbReference type="ChEBI" id="CHEBI:16980"/>
        <dbReference type="ChEBI" id="CHEBI:17447"/>
        <dbReference type="ChEBI" id="CHEBI:57540"/>
        <dbReference type="ChEBI" id="CHEBI:57945"/>
        <dbReference type="EC" id="1.1.1.347"/>
    </reaction>
</comment>
<comment type="catalytic activity">
    <reaction evidence="2">
        <text>(2E,6E)-farnesol + NAD(+) = (2E,6E)-farnesal + NADH + H(+)</text>
        <dbReference type="Rhea" id="RHEA:37167"/>
        <dbReference type="ChEBI" id="CHEBI:15378"/>
        <dbReference type="ChEBI" id="CHEBI:15894"/>
        <dbReference type="ChEBI" id="CHEBI:16619"/>
        <dbReference type="ChEBI" id="CHEBI:57540"/>
        <dbReference type="ChEBI" id="CHEBI:57945"/>
        <dbReference type="EC" id="1.1.1.354"/>
    </reaction>
</comment>
<comment type="cofactor">
    <cofactor evidence="1">
        <name>Zn(2+)</name>
        <dbReference type="ChEBI" id="CHEBI:29105"/>
    </cofactor>
    <text evidence="1">Binds 2 Zn(2+) ions per subunit.</text>
</comment>
<comment type="biophysicochemical properties">
    <kinetics>
        <KM evidence="2">51 uM for geraniol</KM>
        <KM evidence="2">59.5 uM for NAD(+)</KM>
    </kinetics>
    <phDependence>
        <text evidence="2">Optimum pH is 9.0.</text>
    </phDependence>
    <temperatureDependence>
        <text evidence="2">Optimum temperature is 25 degrees Celsius.</text>
    </temperatureDependence>
</comment>
<comment type="subunit">
    <text evidence="2">Monomer.</text>
</comment>
<comment type="similarity">
    <text evidence="4">Belongs to the zinc-containing alcohol dehydrogenase family.</text>
</comment>
<evidence type="ECO:0000250" key="1">
    <source>
        <dbReference type="UniProtKB" id="P11766"/>
    </source>
</evidence>
<evidence type="ECO:0000269" key="2">
    <source>
    </source>
</evidence>
<evidence type="ECO:0000303" key="3">
    <source>
    </source>
</evidence>
<evidence type="ECO:0000305" key="4"/>
<evidence type="ECO:0000312" key="5">
    <source>
        <dbReference type="EMBL" id="BAG32342.1"/>
    </source>
</evidence>
<sequence>VQNPGASAIQCRAAVLRKEGQPMKIEQVLIQAPGPNQVRVKMVSSGLCATDAHLVWGEQKISDLGGIGCPAIAGHEGAGIVESVGENVTEFVPGDSVLTSFQPQCGQCESCLRPSTNICKKYDLIKSTTDVSTARTLDGQPITSLFGLGVYSEYITTTEHHVFKVNKAANLEHASIISCSVGTGFYSATNLAAVYEGSTCAVWGLGGIGINTLFGCKYNKAKHIIGIDVNEDKREIAAEFGCTEFINPKTLGQPVEQYLMDKFGGVDFAFDCVGYKPILDQAAVSLAIDGTMVIIGAAAKEVKFEMPAFNFLFNRKVVGGLLGSKKTKVAYQELCDMYVDGTYDVDRLVSNKFSLDQINEAFQTLKDGNCIRSIVVFK</sequence>
<gene>
    <name evidence="3" type="primary">gedh</name>
</gene>
<proteinExistence type="evidence at protein level"/>
<dbReference type="EC" id="1.1.1.347" evidence="2"/>
<dbReference type="EC" id="1.1.1.354" evidence="2"/>
<dbReference type="EMBL" id="AB305641">
    <property type="protein sequence ID" value="BAG32342.1"/>
    <property type="molecule type" value="mRNA"/>
</dbReference>
<dbReference type="SMR" id="B2NI93"/>
<dbReference type="BioCyc" id="MetaCyc:MONOMER-18374"/>
<dbReference type="GO" id="GO:0005829">
    <property type="term" value="C:cytosol"/>
    <property type="evidence" value="ECO:0007669"/>
    <property type="project" value="TreeGrafter"/>
</dbReference>
<dbReference type="GO" id="GO:0051903">
    <property type="term" value="F:S-(hydroxymethyl)glutathione dehydrogenase [NAD(P)+] activity"/>
    <property type="evidence" value="ECO:0007669"/>
    <property type="project" value="TreeGrafter"/>
</dbReference>
<dbReference type="GO" id="GO:0008270">
    <property type="term" value="F:zinc ion binding"/>
    <property type="evidence" value="ECO:0007669"/>
    <property type="project" value="InterPro"/>
</dbReference>
<dbReference type="GO" id="GO:0046294">
    <property type="term" value="P:formaldehyde catabolic process"/>
    <property type="evidence" value="ECO:0007669"/>
    <property type="project" value="TreeGrafter"/>
</dbReference>
<dbReference type="FunFam" id="3.40.50.720:FF:000003">
    <property type="entry name" value="S-(hydroxymethyl)glutathione dehydrogenase"/>
    <property type="match status" value="1"/>
</dbReference>
<dbReference type="Gene3D" id="3.90.180.10">
    <property type="entry name" value="Medium-chain alcohol dehydrogenases, catalytic domain"/>
    <property type="match status" value="1"/>
</dbReference>
<dbReference type="Gene3D" id="3.40.50.720">
    <property type="entry name" value="NAD(P)-binding Rossmann-like Domain"/>
    <property type="match status" value="1"/>
</dbReference>
<dbReference type="InterPro" id="IPR013149">
    <property type="entry name" value="ADH-like_C"/>
</dbReference>
<dbReference type="InterPro" id="IPR013154">
    <property type="entry name" value="ADH-like_N"/>
</dbReference>
<dbReference type="InterPro" id="IPR002328">
    <property type="entry name" value="ADH_Zn_CS"/>
</dbReference>
<dbReference type="InterPro" id="IPR011032">
    <property type="entry name" value="GroES-like_sf"/>
</dbReference>
<dbReference type="InterPro" id="IPR036291">
    <property type="entry name" value="NAD(P)-bd_dom_sf"/>
</dbReference>
<dbReference type="InterPro" id="IPR020843">
    <property type="entry name" value="PKS_ER"/>
</dbReference>
<dbReference type="PANTHER" id="PTHR43880">
    <property type="entry name" value="ALCOHOL DEHYDROGENASE"/>
    <property type="match status" value="1"/>
</dbReference>
<dbReference type="PANTHER" id="PTHR43880:SF12">
    <property type="entry name" value="ALCOHOL DEHYDROGENASE CLASS-3"/>
    <property type="match status" value="1"/>
</dbReference>
<dbReference type="Pfam" id="PF08240">
    <property type="entry name" value="ADH_N"/>
    <property type="match status" value="1"/>
</dbReference>
<dbReference type="Pfam" id="PF00107">
    <property type="entry name" value="ADH_zinc_N"/>
    <property type="match status" value="1"/>
</dbReference>
<dbReference type="SMART" id="SM00829">
    <property type="entry name" value="PKS_ER"/>
    <property type="match status" value="1"/>
</dbReference>
<dbReference type="SUPFAM" id="SSF50129">
    <property type="entry name" value="GroES-like"/>
    <property type="match status" value="2"/>
</dbReference>
<dbReference type="SUPFAM" id="SSF51735">
    <property type="entry name" value="NAD(P)-binding Rossmann-fold domains"/>
    <property type="match status" value="1"/>
</dbReference>
<dbReference type="PROSITE" id="PS00059">
    <property type="entry name" value="ADH_ZINC"/>
    <property type="match status" value="1"/>
</dbReference>
<keyword id="KW-0903">Direct protein sequencing</keyword>
<keyword id="KW-0479">Metal-binding</keyword>
<keyword id="KW-0520">NAD</keyword>
<keyword id="KW-0560">Oxidoreductase</keyword>
<keyword id="KW-0862">Zinc</keyword>